<organism>
    <name type="scientific">Caldicellulosiruptor bescii (strain ATCC BAA-1888 / DSM 6725 / KCTC 15123 / Z-1320)</name>
    <name type="common">Anaerocellum thermophilum</name>
    <dbReference type="NCBI Taxonomy" id="521460"/>
    <lineage>
        <taxon>Bacteria</taxon>
        <taxon>Bacillati</taxon>
        <taxon>Bacillota</taxon>
        <taxon>Bacillota incertae sedis</taxon>
        <taxon>Caldicellulosiruptorales</taxon>
        <taxon>Caldicellulosiruptoraceae</taxon>
        <taxon>Caldicellulosiruptor</taxon>
    </lineage>
</organism>
<gene>
    <name type="ordered locus">Athe_0545</name>
</gene>
<proteinExistence type="inferred from homology"/>
<sequence>MIVTTTPSIEGKKIVEYKGIVSSEVIVGVNLVKDFIASITDIFGGRSGTYENELIRAREEALQELQNRAAMLGANAVVGIDIDYEVLGANGSMLMVSVTGTAVVVE</sequence>
<accession>B9MPB0</accession>
<comment type="similarity">
    <text evidence="1">Belongs to the UPF0145 family.</text>
</comment>
<protein>
    <recommendedName>
        <fullName evidence="1">UPF0145 protein Athe_0545</fullName>
    </recommendedName>
</protein>
<dbReference type="EMBL" id="CP001393">
    <property type="protein sequence ID" value="ACM59671.1"/>
    <property type="molecule type" value="Genomic_DNA"/>
</dbReference>
<dbReference type="RefSeq" id="WP_013431005.1">
    <property type="nucleotide sequence ID" value="NC_012034.1"/>
</dbReference>
<dbReference type="SMR" id="B9MPB0"/>
<dbReference type="STRING" id="521460.Athe_0545"/>
<dbReference type="GeneID" id="31771900"/>
<dbReference type="KEGG" id="ate:Athe_0545"/>
<dbReference type="eggNOG" id="COG0393">
    <property type="taxonomic scope" value="Bacteria"/>
</dbReference>
<dbReference type="HOGENOM" id="CLU_117144_3_2_9"/>
<dbReference type="Proteomes" id="UP000007723">
    <property type="component" value="Chromosome"/>
</dbReference>
<dbReference type="Gene3D" id="3.30.110.70">
    <property type="entry name" value="Hypothetical protein apc22750. Chain B"/>
    <property type="match status" value="1"/>
</dbReference>
<dbReference type="HAMAP" id="MF_00338">
    <property type="entry name" value="UPF0145"/>
    <property type="match status" value="1"/>
</dbReference>
<dbReference type="InterPro" id="IPR035439">
    <property type="entry name" value="UPF0145_dom_sf"/>
</dbReference>
<dbReference type="InterPro" id="IPR002765">
    <property type="entry name" value="UPF0145_YbjQ-like"/>
</dbReference>
<dbReference type="PANTHER" id="PTHR34068">
    <property type="entry name" value="UPF0145 PROTEIN YBJQ"/>
    <property type="match status" value="1"/>
</dbReference>
<dbReference type="PANTHER" id="PTHR34068:SF1">
    <property type="entry name" value="UPF0145 PROTEIN YBJQ"/>
    <property type="match status" value="1"/>
</dbReference>
<dbReference type="Pfam" id="PF01906">
    <property type="entry name" value="YbjQ_1"/>
    <property type="match status" value="1"/>
</dbReference>
<dbReference type="SUPFAM" id="SSF117782">
    <property type="entry name" value="YbjQ-like"/>
    <property type="match status" value="1"/>
</dbReference>
<feature type="chain" id="PRO_1000200224" description="UPF0145 protein Athe_0545">
    <location>
        <begin position="1"/>
        <end position="106"/>
    </location>
</feature>
<reference key="1">
    <citation type="submission" date="2009-01" db="EMBL/GenBank/DDBJ databases">
        <title>Complete sequence of chromosome of Caldicellulosiruptor becscii DSM 6725.</title>
        <authorList>
            <person name="Lucas S."/>
            <person name="Copeland A."/>
            <person name="Lapidus A."/>
            <person name="Glavina del Rio T."/>
            <person name="Tice H."/>
            <person name="Bruce D."/>
            <person name="Goodwin L."/>
            <person name="Pitluck S."/>
            <person name="Sims D."/>
            <person name="Meincke L."/>
            <person name="Brettin T."/>
            <person name="Detter J.C."/>
            <person name="Han C."/>
            <person name="Larimer F."/>
            <person name="Land M."/>
            <person name="Hauser L."/>
            <person name="Kyrpides N."/>
            <person name="Ovchinnikova G."/>
            <person name="Kataeva I."/>
            <person name="Adams M.W.W."/>
        </authorList>
    </citation>
    <scope>NUCLEOTIDE SEQUENCE [LARGE SCALE GENOMIC DNA]</scope>
    <source>
        <strain>ATCC BAA-1888 / DSM 6725 / KCTC 15123 / Z-1320</strain>
    </source>
</reference>
<evidence type="ECO:0000255" key="1">
    <source>
        <dbReference type="HAMAP-Rule" id="MF_00338"/>
    </source>
</evidence>
<name>Y545_CALBD</name>